<organism>
    <name type="scientific">Saccharomyces cerevisiae (strain ATCC 204508 / S288c)</name>
    <name type="common">Baker's yeast</name>
    <dbReference type="NCBI Taxonomy" id="559292"/>
    <lineage>
        <taxon>Eukaryota</taxon>
        <taxon>Fungi</taxon>
        <taxon>Dikarya</taxon>
        <taxon>Ascomycota</taxon>
        <taxon>Saccharomycotina</taxon>
        <taxon>Saccharomycetes</taxon>
        <taxon>Saccharomycetales</taxon>
        <taxon>Saccharomycetaceae</taxon>
        <taxon>Saccharomyces</taxon>
    </lineage>
</organism>
<protein>
    <recommendedName>
        <fullName>Facilitator of iron transport 2</fullName>
    </recommendedName>
</protein>
<feature type="signal peptide" evidence="1">
    <location>
        <begin position="1"/>
        <end position="18"/>
    </location>
</feature>
<feature type="chain" id="PRO_0000021267" description="Facilitator of iron transport 2">
    <location>
        <begin position="19"/>
        <end position="130"/>
    </location>
</feature>
<feature type="propeptide" id="PRO_0000021268" description="Removed in mature form" evidence="1">
    <location>
        <begin position="131"/>
        <end position="153"/>
    </location>
</feature>
<feature type="region of interest" description="Disordered" evidence="2">
    <location>
        <begin position="73"/>
        <end position="98"/>
    </location>
</feature>
<feature type="compositionally biased region" description="Low complexity" evidence="2">
    <location>
        <begin position="85"/>
        <end position="98"/>
    </location>
</feature>
<feature type="lipid moiety-binding region" description="GPI-anchor amidated glycine" evidence="1">
    <location>
        <position position="130"/>
    </location>
</feature>
<feature type="glycosylation site" description="N-linked (GlcNAc...) asparagine" evidence="1">
    <location>
        <position position="92"/>
    </location>
</feature>
<reference key="1">
    <citation type="journal article" date="1997" name="Nature">
        <title>The nucleotide sequence of Saccharomyces cerevisiae chromosome XV.</title>
        <authorList>
            <person name="Dujon B."/>
            <person name="Albermann K."/>
            <person name="Aldea M."/>
            <person name="Alexandraki D."/>
            <person name="Ansorge W."/>
            <person name="Arino J."/>
            <person name="Benes V."/>
            <person name="Bohn C."/>
            <person name="Bolotin-Fukuhara M."/>
            <person name="Bordonne R."/>
            <person name="Boyer J."/>
            <person name="Camasses A."/>
            <person name="Casamayor A."/>
            <person name="Casas C."/>
            <person name="Cheret G."/>
            <person name="Cziepluch C."/>
            <person name="Daignan-Fornier B."/>
            <person name="Dang V.-D."/>
            <person name="de Haan M."/>
            <person name="Delius H."/>
            <person name="Durand P."/>
            <person name="Fairhead C."/>
            <person name="Feldmann H."/>
            <person name="Gaillon L."/>
            <person name="Galisson F."/>
            <person name="Gamo F.-J."/>
            <person name="Gancedo C."/>
            <person name="Goffeau A."/>
            <person name="Goulding S.E."/>
            <person name="Grivell L.A."/>
            <person name="Habbig B."/>
            <person name="Hand N.J."/>
            <person name="Hani J."/>
            <person name="Hattenhorst U."/>
            <person name="Hebling U."/>
            <person name="Hernando Y."/>
            <person name="Herrero E."/>
            <person name="Heumann K."/>
            <person name="Hiesel R."/>
            <person name="Hilger F."/>
            <person name="Hofmann B."/>
            <person name="Hollenberg C.P."/>
            <person name="Hughes B."/>
            <person name="Jauniaux J.-C."/>
            <person name="Kalogeropoulos A."/>
            <person name="Katsoulou C."/>
            <person name="Kordes E."/>
            <person name="Lafuente M.J."/>
            <person name="Landt O."/>
            <person name="Louis E.J."/>
            <person name="Maarse A.C."/>
            <person name="Madania A."/>
            <person name="Mannhaupt G."/>
            <person name="Marck C."/>
            <person name="Martin R.P."/>
            <person name="Mewes H.-W."/>
            <person name="Michaux G."/>
            <person name="Paces V."/>
            <person name="Parle-McDermott A.G."/>
            <person name="Pearson B.M."/>
            <person name="Perrin A."/>
            <person name="Pettersson B."/>
            <person name="Poch O."/>
            <person name="Pohl T.M."/>
            <person name="Poirey R."/>
            <person name="Portetelle D."/>
            <person name="Pujol A."/>
            <person name="Purnelle B."/>
            <person name="Ramezani Rad M."/>
            <person name="Rechmann S."/>
            <person name="Schwager C."/>
            <person name="Schweizer M."/>
            <person name="Sor F."/>
            <person name="Sterky F."/>
            <person name="Tarassov I.A."/>
            <person name="Teodoru C."/>
            <person name="Tettelin H."/>
            <person name="Thierry A."/>
            <person name="Tobiasch E."/>
            <person name="Tzermia M."/>
            <person name="Uhlen M."/>
            <person name="Unseld M."/>
            <person name="Valens M."/>
            <person name="Vandenbol M."/>
            <person name="Vetter I."/>
            <person name="Vlcek C."/>
            <person name="Voet M."/>
            <person name="Volckaert G."/>
            <person name="Voss H."/>
            <person name="Wambutt R."/>
            <person name="Wedler H."/>
            <person name="Wiemann S."/>
            <person name="Winsor B."/>
            <person name="Wolfe K.H."/>
            <person name="Zollner A."/>
            <person name="Zumstein E."/>
            <person name="Kleine K."/>
        </authorList>
    </citation>
    <scope>NUCLEOTIDE SEQUENCE [LARGE SCALE GENOMIC DNA]</scope>
    <source>
        <strain>ATCC 204508 / S288c</strain>
    </source>
</reference>
<reference key="2">
    <citation type="journal article" date="2014" name="G3 (Bethesda)">
        <title>The reference genome sequence of Saccharomyces cerevisiae: Then and now.</title>
        <authorList>
            <person name="Engel S.R."/>
            <person name="Dietrich F.S."/>
            <person name="Fisk D.G."/>
            <person name="Binkley G."/>
            <person name="Balakrishnan R."/>
            <person name="Costanzo M.C."/>
            <person name="Dwight S.S."/>
            <person name="Hitz B.C."/>
            <person name="Karra K."/>
            <person name="Nash R.S."/>
            <person name="Weng S."/>
            <person name="Wong E.D."/>
            <person name="Lloyd P."/>
            <person name="Skrzypek M.S."/>
            <person name="Miyasato S.R."/>
            <person name="Simison M."/>
            <person name="Cherry J.M."/>
        </authorList>
    </citation>
    <scope>GENOME REANNOTATION</scope>
    <source>
        <strain>ATCC 204508 / S288c</strain>
    </source>
</reference>
<reference key="3">
    <citation type="journal article" date="1999" name="J. Bacteriol.">
        <title>Amino acid residues in the omega-minus region participate in cellular localization of yeast glycosylphosphatidylinositol-attached proteins.</title>
        <authorList>
            <person name="Hamada K."/>
            <person name="Terashima H."/>
            <person name="Arisawa M."/>
            <person name="Yabuki N."/>
            <person name="Kitada K."/>
        </authorList>
    </citation>
    <scope>SUBCELLULAR LOCATION</scope>
</reference>
<reference key="4">
    <citation type="journal article" date="2001" name="J. Biol. Chem.">
        <title>Three cell wall mannoproteins facilitate the uptake of iron in Saccharomyces cerevisiae.</title>
        <authorList>
            <person name="Protchenko O."/>
            <person name="Ferea T."/>
            <person name="Rashford J."/>
            <person name="Tiedeman J."/>
            <person name="Brown P.O."/>
            <person name="Botstein D."/>
            <person name="Philpott C.C."/>
        </authorList>
    </citation>
    <scope>FUNCTION</scope>
    <scope>INDUCTION</scope>
</reference>
<proteinExistence type="evidence at transcript level"/>
<sequence>MKFSTIFGATTVMTAVSAAAVSSVMTTKTITATNGNNVYTKVVTDTADPIISYSTTRTVVVSNSDATYTKVVTEGPDTTSEKSTTKTLTLTNGSGSSTNLYTKTVTQAVESSTSSSSSSSSSSSSASSSGAAPAAFQGASVGALALGLISYLL</sequence>
<keyword id="KW-0134">Cell wall</keyword>
<keyword id="KW-0325">Glycoprotein</keyword>
<keyword id="KW-0336">GPI-anchor</keyword>
<keyword id="KW-0406">Ion transport</keyword>
<keyword id="KW-0408">Iron</keyword>
<keyword id="KW-0410">Iron transport</keyword>
<keyword id="KW-0449">Lipoprotein</keyword>
<keyword id="KW-0472">Membrane</keyword>
<keyword id="KW-1185">Reference proteome</keyword>
<keyword id="KW-0964">Secreted</keyword>
<keyword id="KW-0732">Signal</keyword>
<keyword id="KW-0813">Transport</keyword>
<gene>
    <name type="primary">FIT2</name>
    <name type="ordered locus">YOR382W</name>
</gene>
<name>FIT2_YEAST</name>
<comment type="function">
    <text evidence="4">Involved in the uptake of non-siderophore and siderophore sources of iron. Has a role in the retention of iron in the cell wall and periplasmic space.</text>
</comment>
<comment type="subcellular location">
    <subcellularLocation>
        <location evidence="3">Secreted</location>
        <location evidence="3">Cell wall</location>
    </subcellularLocation>
    <subcellularLocation>
        <location evidence="3">Membrane</location>
        <topology evidence="3">Lipid-anchor</topology>
        <topology evidence="3">GPI-anchor</topology>
    </subcellularLocation>
    <text>Covalently-linked GPI-modified cell wall protein (GPI-CWP).</text>
</comment>
<comment type="induction">
    <text evidence="4">By iron.</text>
</comment>
<comment type="PTM">
    <text>The GPI-anchor is attached to the protein in the endoplasmic reticulum and serves to target the protein to the cell surface. There, the glucosamine-inositol phospholipid moiety is cleaved off and the GPI-modified mannoprotein is covalently attached via its lipidless GPI glycan remnant to the 1,6-beta-glucan of the outer cell wall layer.</text>
</comment>
<dbReference type="EMBL" id="Z75290">
    <property type="protein sequence ID" value="CAA99714.1"/>
    <property type="molecule type" value="Genomic_DNA"/>
</dbReference>
<dbReference type="EMBL" id="BK006948">
    <property type="protein sequence ID" value="DAA11141.1"/>
    <property type="molecule type" value="Genomic_DNA"/>
</dbReference>
<dbReference type="PIR" id="S67294">
    <property type="entry name" value="S67294"/>
</dbReference>
<dbReference type="RefSeq" id="NP_015027.1">
    <property type="nucleotide sequence ID" value="NM_001183802.1"/>
</dbReference>
<dbReference type="BioGRID" id="34763">
    <property type="interactions" value="126"/>
</dbReference>
<dbReference type="DIP" id="DIP-5254N"/>
<dbReference type="FunCoup" id="Q08906">
    <property type="interactions" value="91"/>
</dbReference>
<dbReference type="IntAct" id="Q08906">
    <property type="interactions" value="2"/>
</dbReference>
<dbReference type="STRING" id="4932.YOR382W"/>
<dbReference type="GlyCosmos" id="Q08906">
    <property type="glycosylation" value="1 site, No reported glycans"/>
</dbReference>
<dbReference type="GlyGen" id="Q08906">
    <property type="glycosylation" value="1 site"/>
</dbReference>
<dbReference type="iPTMnet" id="Q08906"/>
<dbReference type="PaxDb" id="4932-YOR382W"/>
<dbReference type="PeptideAtlas" id="Q08906"/>
<dbReference type="EnsemblFungi" id="YOR382W_mRNA">
    <property type="protein sequence ID" value="YOR382W"/>
    <property type="gene ID" value="YOR382W"/>
</dbReference>
<dbReference type="GeneID" id="854564"/>
<dbReference type="KEGG" id="sce:YOR382W"/>
<dbReference type="AGR" id="SGD:S000005909"/>
<dbReference type="SGD" id="S000005909">
    <property type="gene designation" value="FIT2"/>
</dbReference>
<dbReference type="VEuPathDB" id="FungiDB:YOR382W"/>
<dbReference type="eggNOG" id="ENOG502SAAE">
    <property type="taxonomic scope" value="Eukaryota"/>
</dbReference>
<dbReference type="HOGENOM" id="CLU_1714345_0_0_1"/>
<dbReference type="InParanoid" id="Q08906"/>
<dbReference type="OMA" id="TYTEGPD"/>
<dbReference type="OrthoDB" id="4069481at2759"/>
<dbReference type="BioCyc" id="YEAST:G3O-33844-MONOMER"/>
<dbReference type="BioGRID-ORCS" id="854564">
    <property type="hits" value="0 hits in 10 CRISPR screens"/>
</dbReference>
<dbReference type="PRO" id="PR:Q08906"/>
<dbReference type="Proteomes" id="UP000002311">
    <property type="component" value="Chromosome XV"/>
</dbReference>
<dbReference type="RNAct" id="Q08906">
    <property type="molecule type" value="protein"/>
</dbReference>
<dbReference type="GO" id="GO:0071944">
    <property type="term" value="C:cell periphery"/>
    <property type="evidence" value="ECO:0007005"/>
    <property type="project" value="SGD"/>
</dbReference>
<dbReference type="GO" id="GO:0005576">
    <property type="term" value="C:extracellular region"/>
    <property type="evidence" value="ECO:0007669"/>
    <property type="project" value="UniProtKB-KW"/>
</dbReference>
<dbReference type="GO" id="GO:0009277">
    <property type="term" value="C:fungal-type cell wall"/>
    <property type="evidence" value="ECO:0000314"/>
    <property type="project" value="SGD"/>
</dbReference>
<dbReference type="GO" id="GO:0000324">
    <property type="term" value="C:fungal-type vacuole"/>
    <property type="evidence" value="ECO:0007005"/>
    <property type="project" value="SGD"/>
</dbReference>
<dbReference type="GO" id="GO:0098552">
    <property type="term" value="C:side of membrane"/>
    <property type="evidence" value="ECO:0007669"/>
    <property type="project" value="UniProtKB-KW"/>
</dbReference>
<dbReference type="GO" id="GO:0015891">
    <property type="term" value="P:siderophore transport"/>
    <property type="evidence" value="ECO:0000314"/>
    <property type="project" value="SGD"/>
</dbReference>
<dbReference type="InterPro" id="IPR035323">
    <property type="entry name" value="Fit2"/>
</dbReference>
<dbReference type="Pfam" id="PF17357">
    <property type="entry name" value="FIT1_2"/>
    <property type="match status" value="1"/>
</dbReference>
<accession>Q08906</accession>
<accession>D6W375</accession>
<evidence type="ECO:0000255" key="1"/>
<evidence type="ECO:0000256" key="2">
    <source>
        <dbReference type="SAM" id="MobiDB-lite"/>
    </source>
</evidence>
<evidence type="ECO:0000269" key="3">
    <source>
    </source>
</evidence>
<evidence type="ECO:0000269" key="4">
    <source>
    </source>
</evidence>